<keyword id="KW-0002">3D-structure</keyword>
<keyword id="KW-0040">ANK repeat</keyword>
<keyword id="KW-1035">Host cytoplasm</keyword>
<keyword id="KW-0456">Lyase</keyword>
<keyword id="KW-1185">Reference proteome</keyword>
<keyword id="KW-0677">Repeat</keyword>
<keyword id="KW-0964">Secreted</keyword>
<keyword id="KW-0800">Toxin</keyword>
<keyword id="KW-0843">Virulence</keyword>
<accession>Q7NWF2</accession>
<reference key="1">
    <citation type="journal article" date="2003" name="Proc. Natl. Acad. Sci. U.S.A.">
        <title>The complete genome sequence of Chromobacterium violaceum reveals remarkable and exploitable bacterial adaptability.</title>
        <authorList>
            <person name="Vasconcelos A.T.R."/>
            <person name="de Almeida D.F."/>
            <person name="Hungria M."/>
            <person name="Guimaraes C.T."/>
            <person name="Antonio R.V."/>
            <person name="Almeida F.C."/>
            <person name="de Almeida L.G.P."/>
            <person name="de Almeida R."/>
            <person name="Alves-Gomes J.A."/>
            <person name="Andrade E.M."/>
            <person name="Araripe J."/>
            <person name="de Araujo M.F.F."/>
            <person name="Astolfi-Filho S."/>
            <person name="Azevedo V."/>
            <person name="Baptista A.J."/>
            <person name="Bataus L.A.M."/>
            <person name="Batista J.S."/>
            <person name="Belo A."/>
            <person name="van den Berg C."/>
            <person name="Bogo M."/>
            <person name="Bonatto S."/>
            <person name="Bordignon J."/>
            <person name="Brigido M.M."/>
            <person name="Brito C.A."/>
            <person name="Brocchi M."/>
            <person name="Burity H.A."/>
            <person name="Camargo A.A."/>
            <person name="Cardoso D.D.P."/>
            <person name="Carneiro N.P."/>
            <person name="Carraro D.M."/>
            <person name="Carvalho C.M.B."/>
            <person name="Cascardo J.C.M."/>
            <person name="Cavada B.S."/>
            <person name="Chueire L.M.O."/>
            <person name="Creczynski-Pasa T.B."/>
            <person name="Cunha-Junior N.C."/>
            <person name="Fagundes N."/>
            <person name="Falcao C.L."/>
            <person name="Fantinatti F."/>
            <person name="Farias I.P."/>
            <person name="Felipe M.S.S."/>
            <person name="Ferrari L.P."/>
            <person name="Ferro J.A."/>
            <person name="Ferro M.I.T."/>
            <person name="Franco G.R."/>
            <person name="Freitas N.S.A."/>
            <person name="Furlan L.R."/>
            <person name="Gazzinelli R.T."/>
            <person name="Gomes E.A."/>
            <person name="Goncalves P.R."/>
            <person name="Grangeiro T.B."/>
            <person name="Grattapaglia D."/>
            <person name="Grisard E.C."/>
            <person name="Hanna E.S."/>
            <person name="Jardim S.N."/>
            <person name="Laurino J."/>
            <person name="Leoi L.C.T."/>
            <person name="Lima L.F.A."/>
            <person name="Loureiro M.F."/>
            <person name="Lyra M.C.C.P."/>
            <person name="Madeira H.M.F."/>
            <person name="Manfio G.P."/>
            <person name="Maranhao A.Q."/>
            <person name="Martins W.S."/>
            <person name="di Mauro S.M.Z."/>
            <person name="de Medeiros S.R.B."/>
            <person name="Meissner R.V."/>
            <person name="Moreira M.A.M."/>
            <person name="Nascimento F.F."/>
            <person name="Nicolas M.F."/>
            <person name="Oliveira J.G."/>
            <person name="Oliveira S.C."/>
            <person name="Paixao R.F.C."/>
            <person name="Parente J.A."/>
            <person name="Pedrosa F.O."/>
            <person name="Pena S.D.J."/>
            <person name="Pereira J.O."/>
            <person name="Pereira M."/>
            <person name="Pinto L.S.R.C."/>
            <person name="Pinto L.S."/>
            <person name="Porto J.I.R."/>
            <person name="Potrich D.P."/>
            <person name="Ramalho-Neto C.E."/>
            <person name="Reis A.M.M."/>
            <person name="Rigo L.U."/>
            <person name="Rondinelli E."/>
            <person name="Santos E.B.P."/>
            <person name="Santos F.R."/>
            <person name="Schneider M.P.C."/>
            <person name="Seuanez H.N."/>
            <person name="Silva A.M.R."/>
            <person name="da Silva A.L.C."/>
            <person name="Silva D.W."/>
            <person name="Silva R."/>
            <person name="Simoes I.C."/>
            <person name="Simon D."/>
            <person name="Soares C.M.A."/>
            <person name="Soares R.B.A."/>
            <person name="Souza E.M."/>
            <person name="Souza K.R.L."/>
            <person name="Souza R.C."/>
            <person name="Steffens M.B.R."/>
            <person name="Steindel M."/>
            <person name="Teixeira S.R."/>
            <person name="Urmenyi T."/>
            <person name="Vettore A."/>
            <person name="Wassem R."/>
            <person name="Zaha A."/>
            <person name="Simpson A.J.G."/>
        </authorList>
    </citation>
    <scope>NUCLEOTIDE SEQUENCE [LARGE SCALE GENOMIC DNA]</scope>
    <source>
        <strain>ATCC 12472 / DSM 30191 / JCM 1249 / CCUG 213 / NBRC 12614 / NCIMB 9131 / NCTC 9757 / MK</strain>
    </source>
</reference>
<reference key="2">
    <citation type="journal article" date="2021" name="Nature">
        <title>Shigella evades pyroptosis by arginine ADP-riboxanation of caspase-11.</title>
        <authorList>
            <person name="Li Z."/>
            <person name="Liu W."/>
            <person name="Fu J."/>
            <person name="Cheng S."/>
            <person name="Xu Y."/>
            <person name="Wang Z."/>
            <person name="Liu X."/>
            <person name="Shi X."/>
            <person name="Liu Y."/>
            <person name="Qi X."/>
            <person name="Liu X."/>
            <person name="Ding J."/>
            <person name="Shao F."/>
        </authorList>
    </citation>
    <scope>FUNCTION</scope>
    <scope>CATALYTIC ACTIVITY</scope>
    <scope>MUTAGENESIS OF GLU-187 AND HIS-327</scope>
    <source>
        <strain>ATCC 12472 / DSM 30191 / JCM 1249 / CCUG 213 / NBRC 12614 / NCIMB 9131 / NCTC 9757 / MK</strain>
    </source>
</reference>
<reference key="3">
    <citation type="journal article" date="2022" name="Mol. Cell">
        <title>Pathogen hijacks programmed cell death signaling by arginine ADPR-deacylization of caspases.</title>
        <authorList>
            <person name="Peng T."/>
            <person name="Tao X."/>
            <person name="Xia Z."/>
            <person name="Hu S."/>
            <person name="Xue J."/>
            <person name="Zhu Q."/>
            <person name="Pan X."/>
            <person name="Zhang Q."/>
            <person name="Li S."/>
        </authorList>
    </citation>
    <scope>FUNCTION</scope>
    <scope>CATALYTIC ACTIVITY</scope>
    <scope>INTERACTION WITH HOST CALMODULIN</scope>
    <scope>ACTIVITY REGULATION</scope>
    <scope>MUTAGENESIS OF ASP-172 AND ASP-230</scope>
</reference>
<reference evidence="11" key="4">
    <citation type="journal article" date="2022" name="MBio">
        <title>Calmodulin binding activates chromobacterium CopC effector to ADP-riboxanate host apoptotic caspases.</title>
        <authorList>
            <person name="Liu Y."/>
            <person name="Zeng H."/>
            <person name="Hou Y."/>
            <person name="Li Z."/>
            <person name="Li L."/>
            <person name="Song X."/>
            <person name="Ding J."/>
            <person name="Shao F."/>
            <person name="Xu Y."/>
        </authorList>
    </citation>
    <scope>X-RAY CRYSTALLOGRAPHY (3.60 ANGSTROMS) OF 51-487 IN COMPLEX WITH HOST CASP7</scope>
    <scope>FUNCTION</scope>
    <scope>CATALYTIC ACTIVITY</scope>
    <scope>ACTIVE SITE</scope>
    <scope>INTERACTION WITH HOST CALMODULIN</scope>
    <scope>ACTIVITY REGULATION</scope>
    <scope>MUTAGENESIS OF HIS-137; ASP-172; PHE-183; PHE-207; ASP-230; 325-GLU--HIS-327; GLU-325; HIS-417; VAL-442; ASN-443; LYS-454 AND TYR-455</scope>
</reference>
<reference key="5">
    <citation type="journal article" date="2022" name="Mol. Cell">
        <title>Structural insights into caspase ADPR deacylization catalyzed by a bacterial effector and host calmodulin.</title>
        <authorList>
            <person name="Zhang K."/>
            <person name="Peng T."/>
            <person name="Tao X."/>
            <person name="Tian M."/>
            <person name="Li Y."/>
            <person name="Wang Z."/>
            <person name="Ma S."/>
            <person name="Hu S."/>
            <person name="Pan X."/>
            <person name="Xue J."/>
            <person name="Luo J."/>
            <person name="Wu Q."/>
            <person name="Fu Y."/>
            <person name="Li S."/>
        </authorList>
    </citation>
    <scope>STRUCTURE BY ELECTRON MICROSCOPY (3.18 ANGSTROMS) IN COMPLEX WITH NAD; NICOTINAMIDE; ADP-D-RIBOSE; HOST CASP3 AND HOST CALMODULIN</scope>
    <scope>FUNCTION</scope>
    <scope>CATALYTIC ACTIVITY</scope>
    <scope>ACTIVITY REGULATION</scope>
    <scope>ACTIVE SITES</scope>
    <scope>DOMAIN</scope>
    <scope>MUTAGENESIS OF 55-ILE--LEU-59; 58-PHE-LEU-59; 59-LEU-ARG-60; LEU-59; PHE-93; ARG-159; PHE-183; PHE-207; ARG-330; HIS-417; HIS-441; ASN-443; LYS-454 AND TYR-455</scope>
</reference>
<feature type="chain" id="PRO_0000455087" description="Arginine ADP-riboxanase CopC">
    <location>
        <begin position="1"/>
        <end position="487"/>
    </location>
</feature>
<feature type="repeat" description="ANK 2" evidence="2">
    <location>
        <begin position="368"/>
        <end position="398"/>
    </location>
</feature>
<feature type="repeat" description="ANK 1" evidence="3">
    <location>
        <begin position="444"/>
        <end position="476"/>
    </location>
</feature>
<feature type="region of interest" description="Disordered" evidence="4">
    <location>
        <begin position="1"/>
        <end position="27"/>
    </location>
</feature>
<feature type="compositionally biased region" description="Polar residues" evidence="4">
    <location>
        <begin position="1"/>
        <end position="12"/>
    </location>
</feature>
<feature type="active site" evidence="7">
    <location>
        <position position="325"/>
    </location>
</feature>
<feature type="binding site" evidence="8 12">
    <location>
        <position position="137"/>
    </location>
    <ligand>
        <name>NAD(+)</name>
        <dbReference type="ChEBI" id="CHEBI:57540"/>
    </ligand>
</feature>
<feature type="binding site" evidence="8 13">
    <location>
        <position position="137"/>
    </location>
    <ligand>
        <name>nicotinamide</name>
        <dbReference type="ChEBI" id="CHEBI:17154"/>
    </ligand>
</feature>
<feature type="binding site" evidence="8 12">
    <location>
        <position position="138"/>
    </location>
    <ligand>
        <name>NAD(+)</name>
        <dbReference type="ChEBI" id="CHEBI:57540"/>
    </ligand>
</feature>
<feature type="binding site" evidence="8 13">
    <location>
        <position position="139"/>
    </location>
    <ligand>
        <name>ADP-D-ribose</name>
        <dbReference type="ChEBI" id="CHEBI:57967"/>
    </ligand>
</feature>
<feature type="binding site" evidence="8 12">
    <location>
        <position position="139"/>
    </location>
    <ligand>
        <name>NAD(+)</name>
        <dbReference type="ChEBI" id="CHEBI:57540"/>
    </ligand>
</feature>
<feature type="binding site" evidence="8 13">
    <location>
        <position position="143"/>
    </location>
    <ligand>
        <name>ADP-D-ribose</name>
        <dbReference type="ChEBI" id="CHEBI:57967"/>
    </ligand>
</feature>
<feature type="binding site" evidence="8 12">
    <location>
        <position position="143"/>
    </location>
    <ligand>
        <name>NAD(+)</name>
        <dbReference type="ChEBI" id="CHEBI:57540"/>
    </ligand>
</feature>
<feature type="binding site" evidence="8 12">
    <location>
        <position position="150"/>
    </location>
    <ligand>
        <name>NAD(+)</name>
        <dbReference type="ChEBI" id="CHEBI:57540"/>
    </ligand>
</feature>
<feature type="binding site" evidence="8 13">
    <location>
        <position position="152"/>
    </location>
    <ligand>
        <name>ADP-D-ribose</name>
        <dbReference type="ChEBI" id="CHEBI:57967"/>
    </ligand>
</feature>
<feature type="binding site" evidence="8 12">
    <location>
        <position position="152"/>
    </location>
    <ligand>
        <name>NAD(+)</name>
        <dbReference type="ChEBI" id="CHEBI:57540"/>
    </ligand>
</feature>
<feature type="binding site" evidence="8 13">
    <location>
        <position position="154"/>
    </location>
    <ligand>
        <name>ADP-D-ribose</name>
        <dbReference type="ChEBI" id="CHEBI:57967"/>
    </ligand>
</feature>
<feature type="binding site" evidence="8 12">
    <location>
        <position position="154"/>
    </location>
    <ligand>
        <name>NAD(+)</name>
        <dbReference type="ChEBI" id="CHEBI:57540"/>
    </ligand>
</feature>
<feature type="binding site" evidence="8 13">
    <location>
        <position position="157"/>
    </location>
    <ligand>
        <name>ADP-D-ribose</name>
        <dbReference type="ChEBI" id="CHEBI:57967"/>
    </ligand>
</feature>
<feature type="binding site" evidence="8 12">
    <location>
        <position position="157"/>
    </location>
    <ligand>
        <name>NAD(+)</name>
        <dbReference type="ChEBI" id="CHEBI:57540"/>
    </ligand>
</feature>
<feature type="binding site" evidence="8 13">
    <location>
        <position position="166"/>
    </location>
    <ligand>
        <name>ADP-D-ribose</name>
        <dbReference type="ChEBI" id="CHEBI:57967"/>
    </ligand>
</feature>
<feature type="binding site" evidence="8 13">
    <location>
        <position position="167"/>
    </location>
    <ligand>
        <name>ADP-D-ribose</name>
        <dbReference type="ChEBI" id="CHEBI:57967"/>
    </ligand>
</feature>
<feature type="binding site" evidence="8 12">
    <location>
        <position position="167"/>
    </location>
    <ligand>
        <name>NAD(+)</name>
        <dbReference type="ChEBI" id="CHEBI:57540"/>
    </ligand>
</feature>
<feature type="binding site" evidence="8 13">
    <location>
        <position position="168"/>
    </location>
    <ligand>
        <name>ADP-D-ribose</name>
        <dbReference type="ChEBI" id="CHEBI:57967"/>
    </ligand>
</feature>
<feature type="binding site" evidence="8 13">
    <location>
        <position position="183"/>
    </location>
    <ligand>
        <name>ADP-D-ribose</name>
        <dbReference type="ChEBI" id="CHEBI:57967"/>
    </ligand>
</feature>
<feature type="binding site" evidence="8 12">
    <location>
        <position position="183"/>
    </location>
    <ligand>
        <name>NAD(+)</name>
        <dbReference type="ChEBI" id="CHEBI:57540"/>
    </ligand>
</feature>
<feature type="binding site" evidence="8 13">
    <location>
        <position position="183"/>
    </location>
    <ligand>
        <name>nicotinamide</name>
        <dbReference type="ChEBI" id="CHEBI:17154"/>
    </ligand>
</feature>
<feature type="binding site" evidence="8 13">
    <location>
        <position position="184"/>
    </location>
    <ligand>
        <name>nicotinamide</name>
        <dbReference type="ChEBI" id="CHEBI:17154"/>
    </ligand>
</feature>
<feature type="binding site" evidence="8 12">
    <location>
        <position position="202"/>
    </location>
    <ligand>
        <name>NAD(+)</name>
        <dbReference type="ChEBI" id="CHEBI:57540"/>
    </ligand>
</feature>
<feature type="binding site" evidence="8 13">
    <location>
        <position position="202"/>
    </location>
    <ligand>
        <name>nicotinamide</name>
        <dbReference type="ChEBI" id="CHEBI:17154"/>
    </ligand>
</feature>
<feature type="binding site" evidence="8 13">
    <location>
        <position position="207"/>
    </location>
    <ligand>
        <name>ADP-D-ribose</name>
        <dbReference type="ChEBI" id="CHEBI:57967"/>
    </ligand>
</feature>
<feature type="binding site" evidence="8 13">
    <location>
        <position position="207"/>
    </location>
    <ligand>
        <name>nicotinamide</name>
        <dbReference type="ChEBI" id="CHEBI:17154"/>
    </ligand>
</feature>
<feature type="binding site" evidence="8 13">
    <location>
        <position position="230"/>
    </location>
    <ligand>
        <name>ADP-D-ribose</name>
        <dbReference type="ChEBI" id="CHEBI:57967"/>
    </ligand>
</feature>
<feature type="binding site" evidence="8 12">
    <location>
        <position position="230"/>
    </location>
    <ligand>
        <name>NAD(+)</name>
        <dbReference type="ChEBI" id="CHEBI:57540"/>
    </ligand>
</feature>
<feature type="binding site" evidence="8 12">
    <location>
        <position position="325"/>
    </location>
    <ligand>
        <name>NAD(+)</name>
        <dbReference type="ChEBI" id="CHEBI:57540"/>
    </ligand>
</feature>
<feature type="binding site" evidence="8 13">
    <location>
        <position position="325"/>
    </location>
    <ligand>
        <name>nicotinamide</name>
        <dbReference type="ChEBI" id="CHEBI:17154"/>
    </ligand>
</feature>
<feature type="site" description="Important for catalytic activity" evidence="8">
    <location>
        <position position="137"/>
    </location>
</feature>
<feature type="site" description="Important for catalytic activity" evidence="8">
    <location>
        <position position="183"/>
    </location>
</feature>
<feature type="site" description="Important for catalytic activity" evidence="8">
    <location>
        <position position="207"/>
    </location>
</feature>
<feature type="site" description="Important for catalytic activity" evidence="8">
    <location>
        <position position="230"/>
    </location>
</feature>
<feature type="mutagenesis site" description="Abolished interaction with host calmodulin." evidence="8">
    <original>IGAFL</original>
    <variation>AGAFA</variation>
    <location>
        <begin position="55"/>
        <end position="59"/>
    </location>
</feature>
<feature type="mutagenesis site" description="Abolished interaction with host calmodulin." evidence="8">
    <original>FL</original>
    <variation>AA</variation>
    <location>
        <begin position="58"/>
        <end position="59"/>
    </location>
</feature>
<feature type="mutagenesis site" description="Abolished interaction with host calmodulin." evidence="8">
    <original>LR</original>
    <variation>AA</variation>
    <location>
        <begin position="59"/>
        <end position="60"/>
    </location>
</feature>
<feature type="mutagenesis site" description="Abolished interaction with host calmodulin." evidence="8">
    <original>L</original>
    <variation>A</variation>
    <location>
        <position position="59"/>
    </location>
</feature>
<feature type="mutagenesis site" description="Abolished interaction with host calmodulin; when associated with A-159 and A-330." evidence="8">
    <original>F</original>
    <variation>A</variation>
    <location>
        <position position="93"/>
    </location>
</feature>
<feature type="mutagenesis site" description="Does not affect ADP-riboxanase activity." evidence="7">
    <original>H</original>
    <variation>A</variation>
    <location>
        <position position="137"/>
    </location>
</feature>
<feature type="mutagenesis site" description="Abolished interaction with host calmodulin; when associated with A-93 and A-330. Abolished interaction with host calmodulin; when associated with A-330." evidence="8">
    <original>R</original>
    <variation>A</variation>
    <location>
        <position position="159"/>
    </location>
</feature>
<feature type="mutagenesis site" description="Abolished ADP-riboxanase activity and ability to inhibit host cell caspases." evidence="6 7">
    <original>D</original>
    <variation>A</variation>
    <location>
        <position position="172"/>
    </location>
</feature>
<feature type="mutagenesis site" description="Abolished deamination step without affecting the arginine ADP-ribosylation step." evidence="6">
    <original>D</original>
    <variation>E</variation>
    <location>
        <position position="172"/>
    </location>
</feature>
<feature type="mutagenesis site" description="Does not affect ADP-riboxanase activity. Abolished ADP-riboxanase activity; when associated with A-207." evidence="7 8">
    <original>F</original>
    <variation>A</variation>
    <location>
        <position position="183"/>
    </location>
</feature>
<feature type="mutagenesis site" description="In EH/AA mutant; abolished arginine ADP-riboxanation of host CASP4/CASP11; when associated with A-327." evidence="5">
    <original>E</original>
    <variation>A</variation>
    <location>
        <position position="187"/>
    </location>
</feature>
<feature type="mutagenesis site" description="Does not affect ADP-riboxanase activity. Abolished ADP-riboxanase activity; when associated with A-183." evidence="7 8">
    <original>F</original>
    <variation>A</variation>
    <location>
        <position position="207"/>
    </location>
</feature>
<feature type="mutagenesis site" description="Abolished ADP-riboxanase activity and ability to inhibit host cell caspases." evidence="6 7">
    <original>D</original>
    <variation>A</variation>
    <location>
        <position position="230"/>
    </location>
</feature>
<feature type="mutagenesis site" description="Abolished ADP-riboxanase activity." evidence="7">
    <original>EFH</original>
    <variation>AFA</variation>
    <location>
        <begin position="325"/>
        <end position="327"/>
    </location>
</feature>
<feature type="mutagenesis site" description="Abolished ADP-riboxanase activity." evidence="7">
    <original>E</original>
    <variation>A</variation>
    <location>
        <position position="325"/>
    </location>
</feature>
<feature type="mutagenesis site" description="In EH/AA mutant; abolished arginine ADP-riboxanation of host CASP4/CASP11; when associated with A-187." evidence="5">
    <original>H</original>
    <variation>A</variation>
    <location>
        <position position="327"/>
    </location>
</feature>
<feature type="mutagenesis site" description="Abolished interaction with host calmodulin; when associated with A-93 and A-159. Abolished interaction with host calmodulin; when associated with A-159." evidence="8">
    <original>R</original>
    <variation>A</variation>
    <location>
        <position position="330"/>
    </location>
</feature>
<feature type="mutagenesis site" description="Abolished interaction with host CASP7; when associated with A-455. Does not affect interaction with host CASP3." evidence="7 8">
    <original>H</original>
    <variation>A</variation>
    <location>
        <position position="417"/>
    </location>
</feature>
<feature type="mutagenesis site" description="Does not affect interaction with host CASP3." evidence="8">
    <original>H</original>
    <variation>A</variation>
    <location>
        <position position="441"/>
    </location>
</feature>
<feature type="mutagenesis site" description="Abolished interaction with host CASP7." evidence="7">
    <original>V</original>
    <variation>D</variation>
    <location>
        <position position="442"/>
    </location>
</feature>
<feature type="mutagenesis site" description="Abolished interaction with host CASP7; when associated with A-454. Strongly reduced interaction with host CASP3." evidence="7 8">
    <original>N</original>
    <variation>A</variation>
    <location>
        <position position="443"/>
    </location>
</feature>
<feature type="mutagenesis site" description="Abolished interaction with host CASP7; when associated with A-443. Strongly reduced interaction with host CASP3." evidence="7 8">
    <original>K</original>
    <variation>A</variation>
    <location>
        <position position="454"/>
    </location>
</feature>
<feature type="mutagenesis site" description="Abolished interaction with host CASP7; when associated with A-417. Strongly reduced interaction with host CASP3." evidence="7 8">
    <original>Y</original>
    <variation>A</variation>
    <location>
        <position position="455"/>
    </location>
</feature>
<feature type="helix" evidence="15">
    <location>
        <begin position="51"/>
        <end position="73"/>
    </location>
</feature>
<feature type="helix" evidence="15">
    <location>
        <begin position="77"/>
        <end position="80"/>
    </location>
</feature>
<feature type="helix" evidence="15">
    <location>
        <begin position="94"/>
        <end position="111"/>
    </location>
</feature>
<feature type="helix" evidence="15">
    <location>
        <begin position="121"/>
        <end position="129"/>
    </location>
</feature>
<feature type="strand" evidence="15">
    <location>
        <begin position="134"/>
        <end position="136"/>
    </location>
</feature>
<feature type="turn" evidence="15">
    <location>
        <begin position="145"/>
        <end position="147"/>
    </location>
</feature>
<feature type="strand" evidence="15">
    <location>
        <begin position="149"/>
        <end position="152"/>
    </location>
</feature>
<feature type="helix" evidence="15">
    <location>
        <begin position="154"/>
        <end position="157"/>
    </location>
</feature>
<feature type="strand" evidence="15">
    <location>
        <begin position="159"/>
        <end position="161"/>
    </location>
</feature>
<feature type="turn" evidence="15">
    <location>
        <begin position="172"/>
        <end position="176"/>
    </location>
</feature>
<feature type="strand" evidence="15">
    <location>
        <begin position="181"/>
        <end position="187"/>
    </location>
</feature>
<feature type="strand" evidence="15">
    <location>
        <begin position="193"/>
        <end position="195"/>
    </location>
</feature>
<feature type="strand" evidence="15">
    <location>
        <begin position="202"/>
        <end position="204"/>
    </location>
</feature>
<feature type="strand" evidence="15">
    <location>
        <begin position="209"/>
        <end position="215"/>
    </location>
</feature>
<feature type="helix" evidence="15">
    <location>
        <begin position="219"/>
        <end position="223"/>
    </location>
</feature>
<feature type="strand" evidence="15">
    <location>
        <begin position="225"/>
        <end position="229"/>
    </location>
</feature>
<feature type="strand" evidence="14">
    <location>
        <begin position="231"/>
        <end position="233"/>
    </location>
</feature>
<feature type="turn" evidence="15">
    <location>
        <begin position="239"/>
        <end position="241"/>
    </location>
</feature>
<feature type="helix" evidence="15">
    <location>
        <begin position="245"/>
        <end position="248"/>
    </location>
</feature>
<feature type="helix" evidence="15">
    <location>
        <begin position="254"/>
        <end position="256"/>
    </location>
</feature>
<feature type="turn" evidence="15">
    <location>
        <begin position="257"/>
        <end position="259"/>
    </location>
</feature>
<feature type="strand" evidence="15">
    <location>
        <begin position="267"/>
        <end position="269"/>
    </location>
</feature>
<feature type="turn" evidence="15">
    <location>
        <begin position="276"/>
        <end position="278"/>
    </location>
</feature>
<feature type="helix" evidence="15">
    <location>
        <begin position="279"/>
        <end position="291"/>
    </location>
</feature>
<feature type="helix" evidence="15">
    <location>
        <begin position="298"/>
        <end position="301"/>
    </location>
</feature>
<feature type="turn" evidence="15">
    <location>
        <begin position="302"/>
        <end position="305"/>
    </location>
</feature>
<feature type="strand" evidence="15">
    <location>
        <begin position="306"/>
        <end position="308"/>
    </location>
</feature>
<feature type="helix" evidence="15">
    <location>
        <begin position="312"/>
        <end position="315"/>
    </location>
</feature>
<feature type="helix" evidence="15">
    <location>
        <begin position="318"/>
        <end position="321"/>
    </location>
</feature>
<feature type="strand" evidence="15">
    <location>
        <begin position="325"/>
        <end position="335"/>
    </location>
</feature>
<feature type="strand" evidence="15">
    <location>
        <begin position="338"/>
        <end position="341"/>
    </location>
</feature>
<feature type="helix" evidence="15">
    <location>
        <begin position="347"/>
        <end position="352"/>
    </location>
</feature>
<feature type="helix" evidence="15">
    <location>
        <begin position="356"/>
        <end position="362"/>
    </location>
</feature>
<feature type="helix" evidence="15">
    <location>
        <begin position="367"/>
        <end position="377"/>
    </location>
</feature>
<feature type="helix" evidence="15">
    <location>
        <begin position="378"/>
        <end position="380"/>
    </location>
</feature>
<feature type="helix" evidence="15">
    <location>
        <begin position="382"/>
        <end position="391"/>
    </location>
</feature>
<feature type="helix" evidence="15">
    <location>
        <begin position="396"/>
        <end position="399"/>
    </location>
</feature>
<feature type="helix" evidence="15">
    <location>
        <begin position="410"/>
        <end position="415"/>
    </location>
</feature>
<feature type="strand" evidence="14">
    <location>
        <begin position="416"/>
        <end position="418"/>
    </location>
</feature>
<feature type="helix" evidence="15">
    <location>
        <begin position="421"/>
        <end position="429"/>
    </location>
</feature>
<feature type="strand" evidence="15">
    <location>
        <begin position="440"/>
        <end position="443"/>
    </location>
</feature>
<feature type="helix" evidence="15">
    <location>
        <begin position="448"/>
        <end position="454"/>
    </location>
</feature>
<feature type="helix" evidence="15">
    <location>
        <begin position="458"/>
        <end position="464"/>
    </location>
</feature>
<dbReference type="EC" id="4.3.99.-" evidence="5 6 7 8"/>
<dbReference type="EMBL" id="AE016825">
    <property type="protein sequence ID" value="AAQ59710.1"/>
    <property type="molecule type" value="Genomic_DNA"/>
</dbReference>
<dbReference type="RefSeq" id="WP_011135586.1">
    <property type="nucleotide sequence ID" value="NC_005085.1"/>
</dbReference>
<dbReference type="PDB" id="7WZS">
    <property type="method" value="X-ray"/>
    <property type="resolution" value="3.60 A"/>
    <property type="chains" value="A=51-487"/>
</dbReference>
<dbReference type="PDB" id="7XN4">
    <property type="method" value="EM"/>
    <property type="resolution" value="3.35 A"/>
    <property type="chains" value="B=1-487"/>
</dbReference>
<dbReference type="PDB" id="7XN5">
    <property type="method" value="EM"/>
    <property type="resolution" value="3.18 A"/>
    <property type="chains" value="B=1-487"/>
</dbReference>
<dbReference type="PDB" id="7XN6">
    <property type="method" value="EM"/>
    <property type="resolution" value="3.45 A"/>
    <property type="chains" value="B=1-487"/>
</dbReference>
<dbReference type="PDBsum" id="7WZS"/>
<dbReference type="PDBsum" id="7XN4"/>
<dbReference type="PDBsum" id="7XN5"/>
<dbReference type="PDBsum" id="7XN6"/>
<dbReference type="EMDB" id="EMD-33310"/>
<dbReference type="EMDB" id="EMD-33311"/>
<dbReference type="EMDB" id="EMD-33312"/>
<dbReference type="SMR" id="Q7NWF2"/>
<dbReference type="KEGG" id="cvi:CV_2038"/>
<dbReference type="eggNOG" id="ENOG502ZC73">
    <property type="taxonomic scope" value="Bacteria"/>
</dbReference>
<dbReference type="HOGENOM" id="CLU_053336_0_0_4"/>
<dbReference type="OrthoDB" id="9795838at2"/>
<dbReference type="Proteomes" id="UP000001424">
    <property type="component" value="Chromosome"/>
</dbReference>
<dbReference type="GO" id="GO:0005576">
    <property type="term" value="C:extracellular region"/>
    <property type="evidence" value="ECO:0007669"/>
    <property type="project" value="UniProtKB-SubCell"/>
</dbReference>
<dbReference type="GO" id="GO:0030430">
    <property type="term" value="C:host cell cytoplasm"/>
    <property type="evidence" value="ECO:0007669"/>
    <property type="project" value="UniProtKB-SubCell"/>
</dbReference>
<dbReference type="GO" id="GO:0140740">
    <property type="term" value="F:ADP-riboxanase activity"/>
    <property type="evidence" value="ECO:0000314"/>
    <property type="project" value="UniProtKB"/>
</dbReference>
<dbReference type="GO" id="GO:0005516">
    <property type="term" value="F:calmodulin binding"/>
    <property type="evidence" value="ECO:0000314"/>
    <property type="project" value="UniProtKB"/>
</dbReference>
<dbReference type="GO" id="GO:0090729">
    <property type="term" value="F:toxin activity"/>
    <property type="evidence" value="ECO:0007669"/>
    <property type="project" value="UniProtKB-KW"/>
</dbReference>
<dbReference type="GO" id="GO:0052040">
    <property type="term" value="P:symbiont-mediated perturbation of host programmed cell death"/>
    <property type="evidence" value="ECO:0000314"/>
    <property type="project" value="UniProt"/>
</dbReference>
<dbReference type="Gene3D" id="1.25.40.20">
    <property type="entry name" value="Ankyrin repeat-containing domain"/>
    <property type="match status" value="1"/>
</dbReference>
<dbReference type="InterPro" id="IPR002110">
    <property type="entry name" value="Ankyrin_rpt"/>
</dbReference>
<dbReference type="InterPro" id="IPR036770">
    <property type="entry name" value="Ankyrin_rpt-contain_sf"/>
</dbReference>
<dbReference type="InterPro" id="IPR010366">
    <property type="entry name" value="OspC1-4"/>
</dbReference>
<dbReference type="Pfam" id="PF13606">
    <property type="entry name" value="Ank_3"/>
    <property type="match status" value="1"/>
</dbReference>
<dbReference type="Pfam" id="PF06128">
    <property type="entry name" value="Shigella_OspC"/>
    <property type="match status" value="1"/>
</dbReference>
<dbReference type="SUPFAM" id="SSF48403">
    <property type="entry name" value="Ankyrin repeat"/>
    <property type="match status" value="1"/>
</dbReference>
<dbReference type="PROSITE" id="PS50297">
    <property type="entry name" value="ANK_REP_REGION"/>
    <property type="match status" value="1"/>
</dbReference>
<dbReference type="PROSITE" id="PS50088">
    <property type="entry name" value="ANK_REPEAT"/>
    <property type="match status" value="1"/>
</dbReference>
<evidence type="ECO:0000250" key="1">
    <source>
        <dbReference type="UniProtKB" id="A0A0H2US87"/>
    </source>
</evidence>
<evidence type="ECO:0000255" key="2"/>
<evidence type="ECO:0000255" key="3">
    <source>
        <dbReference type="PROSITE-ProRule" id="PRU00023"/>
    </source>
</evidence>
<evidence type="ECO:0000256" key="4">
    <source>
        <dbReference type="SAM" id="MobiDB-lite"/>
    </source>
</evidence>
<evidence type="ECO:0000269" key="5">
    <source>
    </source>
</evidence>
<evidence type="ECO:0000269" key="6">
    <source>
    </source>
</evidence>
<evidence type="ECO:0000269" key="7">
    <source>
    </source>
</evidence>
<evidence type="ECO:0000269" key="8">
    <source>
    </source>
</evidence>
<evidence type="ECO:0000303" key="9">
    <source>
    </source>
</evidence>
<evidence type="ECO:0000305" key="10"/>
<evidence type="ECO:0007744" key="11">
    <source>
        <dbReference type="PDB" id="7WZS"/>
    </source>
</evidence>
<evidence type="ECO:0007744" key="12">
    <source>
        <dbReference type="PDB" id="7XN4"/>
    </source>
</evidence>
<evidence type="ECO:0007744" key="13">
    <source>
        <dbReference type="PDB" id="7XN5"/>
    </source>
</evidence>
<evidence type="ECO:0007829" key="14">
    <source>
        <dbReference type="PDB" id="7XN4"/>
    </source>
</evidence>
<evidence type="ECO:0007829" key="15">
    <source>
        <dbReference type="PDB" id="7XN5"/>
    </source>
</evidence>
<sequence>MRVENHSPSLSKLNPPEAGSGDPTAIGRRLSGIRRAPLPHVSAGSDGEAAAAGKIGAFLRKAVAAQSYGLMFANGKLFEATGDALEKRGQYGFSALQRLDGLSRRNLAAVEARLGALDSAERGLKERIMTGAWHFRHQSNAALDDGKTAAIASNHLLARESRSSGGNTFAGDKALLSNHDFVFFGVEFSGRGKQDKPLNHKHSTMDFGANAYVVPDTLPACRHGYLTLTDHFFNRVPGGREAEHQDFVGSFPQMGAETGRWIHEGKYRQNAPIFNYRDMKAAVALHLIEFLRDSKDAAFKAYVFDQAMQSGQALDRVLNSVFQAEFHIPRLMATTDYAKHPLRPMLLKEAVDSVNLPALSGLVSSKGDAVTAMWHAIDKGKDAVAAHLLGNWRFEAGDFASAPPGFYHELNYALSEHGASVYILDQFLSRGWAAVNAPFEHVNSGETMLDNAVKYGNREMAAALIKHGADRNLLSEWNGGKLDALLA</sequence>
<organism>
    <name type="scientific">Chromobacterium violaceum (strain ATCC 12472 / DSM 30191 / JCM 1249 / CCUG 213 / NBRC 12614 / NCIMB 9131 / NCTC 9757 / MK)</name>
    <dbReference type="NCBI Taxonomy" id="243365"/>
    <lineage>
        <taxon>Bacteria</taxon>
        <taxon>Pseudomonadati</taxon>
        <taxon>Pseudomonadota</taxon>
        <taxon>Betaproteobacteria</taxon>
        <taxon>Neisseriales</taxon>
        <taxon>Chromobacteriaceae</taxon>
        <taxon>Chromobacterium</taxon>
    </lineage>
</organism>
<gene>
    <name evidence="9" type="primary">copC</name>
    <name type="ordered locus">CV_2038</name>
</gene>
<proteinExistence type="evidence at protein level"/>
<comment type="function">
    <text evidence="5 6 7 8">ADP-riboxanase effector that inhibits host cell programmed cell death (PubMed:34671164, PubMed:35338844, PubMed:35446120, PubMed:36423631). Acts by mediating arginine ADP-riboxanation of host caspases (CASP3, CASP7, CASP8 and CASP9), blocking their processing and activation (PubMed:35338844, PubMed:35446120, PubMed:36423631). ADP-riboxanation of host apoptotic caspases (CASP3, CASP7, CASP8 and CASP9) prevents their activation, thereby inhibiting host cell apoptosis (PubMed:35338844, PubMed:35446120, PubMed:36423631). ADP-riboxanation of host CASP8 also inhibits host cell necroptosis (PubMed:35338844, PubMed:35446120). ADP-riboxanation of host CASP3 also abolishes pyroptosis by preventing its ability to cleave GSDME (PubMed:35338844). May also able to inactivate CASP4/CASP11, blocking inhibiting LPS-induced pyroptosis; however this activity is unsure in vivo (PubMed:34671164). ADP-riboxanation takes place in several steps: CopC first binds host caspases and NAD(+); NAD(+) is hydrolyzed to nicotinamide and ADP-D-ribose (PubMed:36423631). CopC then transfers the ADP-D-ribose to the modified arginine of caspases and forms the ADP-D-ribose-deacylization on arginine, leading to deamination to remove one N-omega group on target arginine (PubMed:35338844, PubMed:36423631).</text>
</comment>
<comment type="catalytic activity">
    <reaction evidence="5 6 7 8">
        <text>L-arginyl-[protein] + NAD(+) = ADP-riboxanated L-argininyl-[protein] + nicotinamide + NH4(+) + H(+)</text>
        <dbReference type="Rhea" id="RHEA:69500"/>
        <dbReference type="Rhea" id="RHEA-COMP:10532"/>
        <dbReference type="Rhea" id="RHEA-COMP:17719"/>
        <dbReference type="ChEBI" id="CHEBI:15378"/>
        <dbReference type="ChEBI" id="CHEBI:17154"/>
        <dbReference type="ChEBI" id="CHEBI:28938"/>
        <dbReference type="ChEBI" id="CHEBI:29965"/>
        <dbReference type="ChEBI" id="CHEBI:57540"/>
        <dbReference type="ChEBI" id="CHEBI:184300"/>
    </reaction>
    <physiologicalReaction direction="left-to-right" evidence="5 6 7 8">
        <dbReference type="Rhea" id="RHEA:69501"/>
    </physiologicalReaction>
</comment>
<comment type="activity regulation">
    <text evidence="6 7 8">Interaction with host calmodulin (CALM1, CALM2 and/or CALM3) is required to mediate arginine ADP-riboxanation of host caspases.</text>
</comment>
<comment type="subunit">
    <text evidence="6 7 8">Interacts with host calmodulin (CALM1, CALM2 and/or CALM3); specifically interacts with the apo form of calmodulin and calmodulin-binding is required to mediate arginine ADP-riboxanation of host caspases.</text>
</comment>
<comment type="subcellular location">
    <subcellularLocation>
        <location evidence="1">Secreted</location>
    </subcellularLocation>
    <subcellularLocation>
        <location evidence="1">Host cytoplasm</location>
    </subcellularLocation>
    <text evidence="1">Secreted via the type III secretion system (T3SS).</text>
</comment>
<comment type="domain">
    <text evidence="8">The ANK repeats at the N-terminus recognize and bind host caspases (CASP3, CASP7, CASP8 and CASP9).</text>
</comment>
<comment type="similarity">
    <text evidence="10">Belongs to the OspC family.</text>
</comment>
<name>COPC_CHRVO</name>
<protein>
    <recommendedName>
        <fullName evidence="10">Arginine ADP-riboxanase CopC</fullName>
        <ecNumber evidence="5 6 7 8">4.3.99.-</ecNumber>
    </recommendedName>
</protein>